<comment type="function">
    <text evidence="1">Mnh complex is a Na(+)/H(+) antiporter involved in Na(+) excretion.</text>
</comment>
<comment type="subunit">
    <text evidence="1">May form a heterooligomeric complex that consists of seven subunits: mnhA1, mnhB1, mnhC1, mnhD1, mnhE1, mnhF1 and mnhG1.</text>
</comment>
<comment type="subcellular location">
    <subcellularLocation>
        <location evidence="3">Cell membrane</location>
        <topology evidence="3">Multi-pass membrane protein</topology>
    </subcellularLocation>
</comment>
<comment type="similarity">
    <text evidence="3">Belongs to the CPA3 antiporters (TC 2.A.63) subunit D family.</text>
</comment>
<name>MNHD1_STAAW</name>
<organism>
    <name type="scientific">Staphylococcus aureus (strain MW2)</name>
    <dbReference type="NCBI Taxonomy" id="196620"/>
    <lineage>
        <taxon>Bacteria</taxon>
        <taxon>Bacillati</taxon>
        <taxon>Bacillota</taxon>
        <taxon>Bacilli</taxon>
        <taxon>Bacillales</taxon>
        <taxon>Staphylococcaceae</taxon>
        <taxon>Staphylococcus</taxon>
    </lineage>
</organism>
<accession>P60687</accession>
<accession>Q9ZNG3</accession>
<protein>
    <recommendedName>
        <fullName>Na(+)/H(+) antiporter subunit D1</fullName>
    </recommendedName>
    <alternativeName>
        <fullName>Mnh complex subunit D1</fullName>
    </alternativeName>
</protein>
<evidence type="ECO:0000250" key="1"/>
<evidence type="ECO:0000255" key="2"/>
<evidence type="ECO:0000305" key="3"/>
<proteinExistence type="inferred from homology"/>
<keyword id="KW-0050">Antiport</keyword>
<keyword id="KW-1003">Cell membrane</keyword>
<keyword id="KW-0375">Hydrogen ion transport</keyword>
<keyword id="KW-0406">Ion transport</keyword>
<keyword id="KW-0472">Membrane</keyword>
<keyword id="KW-0915">Sodium</keyword>
<keyword id="KW-0739">Sodium transport</keyword>
<keyword id="KW-0812">Transmembrane</keyword>
<keyword id="KW-1133">Transmembrane helix</keyword>
<keyword id="KW-0813">Transport</keyword>
<sequence length="498" mass="54756">MIESNMLVLTLVIPVITAILLVFIGKRPIIKRYVALGGTLLTLVAAIINLANVVKHGPIRVELGSWKAPYSIVFVLDIFSALLIITSIIITAIVILYSYQTIGIERERYYYYFSVLFMLIGIIGAFTTGDIFNLFVFFEVFLMSSYFLLVIGSTKIQLQETIKYVLVNVVSSSFFVMGVAILYSVVGTLNLADISNKLANLSAHDSGLVNIVFILFIFVFATKAGVFPMFVWLPSAYYAPPIPIIAFFGALLTKVGVYAIARTLSLFFSDNVSFSHYVILFLALLTIIFGCVGAVAYANIKKIILYNVMIAVGVILVGVAMMTESGMIGAIYYTLHDMLVKLALFLLIGIMIKITGTADLRQFGGLIKRYPVLGWSFFIAALSLAGIPPLSGFYGKFFIVQSTFERGFYLSGVIVLLSSLVVLYSVIRIFLQGFFGQPKGYDLNNKVDVKYLTTIAIVAVVITVLYGLSADYLYPMVKAGAETFYNPSTYVKAVLGGK</sequence>
<gene>
    <name type="primary">mnhD1</name>
    <name type="ordered locus">MW0831</name>
</gene>
<reference key="1">
    <citation type="journal article" date="2002" name="Lancet">
        <title>Genome and virulence determinants of high virulence community-acquired MRSA.</title>
        <authorList>
            <person name="Baba T."/>
            <person name="Takeuchi F."/>
            <person name="Kuroda M."/>
            <person name="Yuzawa H."/>
            <person name="Aoki K."/>
            <person name="Oguchi A."/>
            <person name="Nagai Y."/>
            <person name="Iwama N."/>
            <person name="Asano K."/>
            <person name="Naimi T."/>
            <person name="Kuroda H."/>
            <person name="Cui L."/>
            <person name="Yamamoto K."/>
            <person name="Hiramatsu K."/>
        </authorList>
    </citation>
    <scope>NUCLEOTIDE SEQUENCE [LARGE SCALE GENOMIC DNA]</scope>
    <source>
        <strain>MW2</strain>
    </source>
</reference>
<feature type="chain" id="PRO_0000217082" description="Na(+)/H(+) antiporter subunit D1">
    <location>
        <begin position="1"/>
        <end position="498"/>
    </location>
</feature>
<feature type="transmembrane region" description="Helical" evidence="2">
    <location>
        <begin position="6"/>
        <end position="25"/>
    </location>
</feature>
<feature type="transmembrane region" description="Helical" evidence="2">
    <location>
        <begin position="32"/>
        <end position="54"/>
    </location>
</feature>
<feature type="transmembrane region" description="Helical" evidence="2">
    <location>
        <begin position="74"/>
        <end position="96"/>
    </location>
</feature>
<feature type="transmembrane region" description="Helical" evidence="2">
    <location>
        <begin position="109"/>
        <end position="126"/>
    </location>
</feature>
<feature type="transmembrane region" description="Helical" evidence="2">
    <location>
        <begin position="131"/>
        <end position="153"/>
    </location>
</feature>
<feature type="transmembrane region" description="Helical" evidence="2">
    <location>
        <begin position="165"/>
        <end position="187"/>
    </location>
</feature>
<feature type="transmembrane region" description="Helical" evidence="2">
    <location>
        <begin position="211"/>
        <end position="233"/>
    </location>
</feature>
<feature type="transmembrane region" description="Helical" evidence="2">
    <location>
        <begin position="238"/>
        <end position="260"/>
    </location>
</feature>
<feature type="transmembrane region" description="Helical" evidence="2">
    <location>
        <begin position="275"/>
        <end position="297"/>
    </location>
</feature>
<feature type="transmembrane region" description="Helical" evidence="2">
    <location>
        <begin position="304"/>
        <end position="323"/>
    </location>
</feature>
<feature type="transmembrane region" description="Helical" evidence="2">
    <location>
        <begin position="328"/>
        <end position="350"/>
    </location>
</feature>
<feature type="transmembrane region" description="Helical" evidence="2">
    <location>
        <begin position="371"/>
        <end position="393"/>
    </location>
</feature>
<feature type="transmembrane region" description="Helical" evidence="2">
    <location>
        <begin position="408"/>
        <end position="430"/>
    </location>
</feature>
<feature type="transmembrane region" description="Helical" evidence="2">
    <location>
        <begin position="451"/>
        <end position="470"/>
    </location>
</feature>
<dbReference type="EMBL" id="BA000033">
    <property type="protein sequence ID" value="BAB94696.1"/>
    <property type="molecule type" value="Genomic_DNA"/>
</dbReference>
<dbReference type="PIR" id="F89861">
    <property type="entry name" value="F89861"/>
</dbReference>
<dbReference type="RefSeq" id="WP_000573077.1">
    <property type="nucleotide sequence ID" value="NC_003923.1"/>
</dbReference>
<dbReference type="SMR" id="P60687"/>
<dbReference type="KEGG" id="sam:MW0831"/>
<dbReference type="HOGENOM" id="CLU_007100_9_2_9"/>
<dbReference type="GO" id="GO:0005886">
    <property type="term" value="C:plasma membrane"/>
    <property type="evidence" value="ECO:0007669"/>
    <property type="project" value="UniProtKB-SubCell"/>
</dbReference>
<dbReference type="GO" id="GO:0008137">
    <property type="term" value="F:NADH dehydrogenase (ubiquinone) activity"/>
    <property type="evidence" value="ECO:0007669"/>
    <property type="project" value="InterPro"/>
</dbReference>
<dbReference type="GO" id="GO:0015386">
    <property type="term" value="F:potassium:proton antiporter activity"/>
    <property type="evidence" value="ECO:0007669"/>
    <property type="project" value="InterPro"/>
</dbReference>
<dbReference type="GO" id="GO:0042773">
    <property type="term" value="P:ATP synthesis coupled electron transport"/>
    <property type="evidence" value="ECO:0007669"/>
    <property type="project" value="InterPro"/>
</dbReference>
<dbReference type="GO" id="GO:0006814">
    <property type="term" value="P:sodium ion transport"/>
    <property type="evidence" value="ECO:0007669"/>
    <property type="project" value="UniProtKB-KW"/>
</dbReference>
<dbReference type="InterPro" id="IPR050586">
    <property type="entry name" value="CPA3_Na-H_Antiporter_D"/>
</dbReference>
<dbReference type="InterPro" id="IPR004775">
    <property type="entry name" value="MnhD1"/>
</dbReference>
<dbReference type="InterPro" id="IPR003918">
    <property type="entry name" value="NADH_UbQ_OxRdtase"/>
</dbReference>
<dbReference type="InterPro" id="IPR001750">
    <property type="entry name" value="ND/Mrp_TM"/>
</dbReference>
<dbReference type="NCBIfam" id="TIGR00944">
    <property type="entry name" value="2a6301s04"/>
    <property type="match status" value="1"/>
</dbReference>
<dbReference type="NCBIfam" id="NF005818">
    <property type="entry name" value="PRK07691.1"/>
    <property type="match status" value="1"/>
</dbReference>
<dbReference type="PANTHER" id="PTHR42703:SF1">
    <property type="entry name" value="NA(+)_H(+) ANTIPORTER SUBUNIT D1"/>
    <property type="match status" value="1"/>
</dbReference>
<dbReference type="PANTHER" id="PTHR42703">
    <property type="entry name" value="NADH DEHYDROGENASE"/>
    <property type="match status" value="1"/>
</dbReference>
<dbReference type="Pfam" id="PF00361">
    <property type="entry name" value="Proton_antipo_M"/>
    <property type="match status" value="1"/>
</dbReference>
<dbReference type="PRINTS" id="PR01437">
    <property type="entry name" value="NUOXDRDTASE4"/>
</dbReference>